<comment type="function">
    <text evidence="1">Responsible for the transport of C4-dicarboxylates.</text>
</comment>
<comment type="subcellular location">
    <subcellularLocation>
        <location evidence="1">Cell inner membrane</location>
        <topology evidence="2">Multi-pass membrane protein</topology>
    </subcellularLocation>
</comment>
<comment type="similarity">
    <text evidence="3">Belongs to the DcuA/DcuB transporter (TC 2.A.13.1) family.</text>
</comment>
<evidence type="ECO:0000250" key="1">
    <source>
        <dbReference type="UniProtKB" id="P0ABN5"/>
    </source>
</evidence>
<evidence type="ECO:0000255" key="2"/>
<evidence type="ECO:0000305" key="3"/>
<proteinExistence type="inferred from homology"/>
<keyword id="KW-0997">Cell inner membrane</keyword>
<keyword id="KW-1003">Cell membrane</keyword>
<keyword id="KW-0472">Membrane</keyword>
<keyword id="KW-1185">Reference proteome</keyword>
<keyword id="KW-0812">Transmembrane</keyword>
<keyword id="KW-1133">Transmembrane helix</keyword>
<keyword id="KW-0813">Transport</keyword>
<protein>
    <recommendedName>
        <fullName evidence="1">C4-dicarboxylate transporter DcuA</fullName>
    </recommendedName>
</protein>
<organism>
    <name type="scientific">Helicobacter pylori (strain ATCC 700392 / 26695)</name>
    <name type="common">Campylobacter pylori</name>
    <dbReference type="NCBI Taxonomy" id="85962"/>
    <lineage>
        <taxon>Bacteria</taxon>
        <taxon>Pseudomonadati</taxon>
        <taxon>Campylobacterota</taxon>
        <taxon>Epsilonproteobacteria</taxon>
        <taxon>Campylobacterales</taxon>
        <taxon>Helicobacteraceae</taxon>
        <taxon>Helicobacter</taxon>
    </lineage>
</organism>
<dbReference type="EMBL" id="AE000511">
    <property type="protein sequence ID" value="AAD07773.1"/>
    <property type="molecule type" value="Genomic_DNA"/>
</dbReference>
<dbReference type="PIR" id="D64610">
    <property type="entry name" value="D64610"/>
</dbReference>
<dbReference type="RefSeq" id="NP_207518.1">
    <property type="nucleotide sequence ID" value="NC_000915.1"/>
</dbReference>
<dbReference type="RefSeq" id="WP_000227192.1">
    <property type="nucleotide sequence ID" value="NC_018939.1"/>
</dbReference>
<dbReference type="FunCoup" id="O25425">
    <property type="interactions" value="1"/>
</dbReference>
<dbReference type="STRING" id="85962.HP_0724"/>
<dbReference type="PaxDb" id="85962-C694_03725"/>
<dbReference type="EnsemblBacteria" id="AAD07773">
    <property type="protein sequence ID" value="AAD07773"/>
    <property type="gene ID" value="HP_0724"/>
</dbReference>
<dbReference type="KEGG" id="heo:C694_03725"/>
<dbReference type="KEGG" id="hpy:HP_0724"/>
<dbReference type="PATRIC" id="fig|85962.47.peg.773"/>
<dbReference type="eggNOG" id="COG2704">
    <property type="taxonomic scope" value="Bacteria"/>
</dbReference>
<dbReference type="InParanoid" id="O25425"/>
<dbReference type="OrthoDB" id="9770910at2"/>
<dbReference type="PhylomeDB" id="O25425"/>
<dbReference type="Proteomes" id="UP000000429">
    <property type="component" value="Chromosome"/>
</dbReference>
<dbReference type="GO" id="GO:0005886">
    <property type="term" value="C:plasma membrane"/>
    <property type="evidence" value="ECO:0007669"/>
    <property type="project" value="UniProtKB-SubCell"/>
</dbReference>
<dbReference type="GO" id="GO:0015556">
    <property type="term" value="F:C4-dicarboxylate transmembrane transporter activity"/>
    <property type="evidence" value="ECO:0007669"/>
    <property type="project" value="InterPro"/>
</dbReference>
<dbReference type="InterPro" id="IPR004668">
    <property type="entry name" value="Anaer_Dcu_memb_transpt"/>
</dbReference>
<dbReference type="NCBIfam" id="TIGR00770">
    <property type="entry name" value="Dcu"/>
    <property type="match status" value="1"/>
</dbReference>
<dbReference type="NCBIfam" id="NF006927">
    <property type="entry name" value="PRK09412.1"/>
    <property type="match status" value="1"/>
</dbReference>
<dbReference type="NCBIfam" id="NF009136">
    <property type="entry name" value="PRK12489.1"/>
    <property type="match status" value="1"/>
</dbReference>
<dbReference type="PANTHER" id="PTHR36106">
    <property type="entry name" value="ANAEROBIC C4-DICARBOXYLATE TRANSPORTER DCUB"/>
    <property type="match status" value="1"/>
</dbReference>
<dbReference type="PANTHER" id="PTHR36106:SF2">
    <property type="entry name" value="C4-DICARBOXYLATE TRANSPORTER DCUA"/>
    <property type="match status" value="1"/>
</dbReference>
<dbReference type="Pfam" id="PF03605">
    <property type="entry name" value="DcuA_DcuB"/>
    <property type="match status" value="1"/>
</dbReference>
<dbReference type="PIRSF" id="PIRSF004539">
    <property type="entry name" value="C4-dicrbxl_trns"/>
    <property type="match status" value="1"/>
</dbReference>
<gene>
    <name type="primary">dcuA</name>
    <name type="ordered locus">HP_0724</name>
</gene>
<feature type="chain" id="PRO_0000170350" description="C4-dicarboxylate transporter DcuA">
    <location>
        <begin position="1"/>
        <end position="443"/>
    </location>
</feature>
<feature type="transmembrane region" description="Helical" evidence="2">
    <location>
        <begin position="21"/>
        <end position="41"/>
    </location>
</feature>
<feature type="transmembrane region" description="Helical" evidence="2">
    <location>
        <begin position="46"/>
        <end position="66"/>
    </location>
</feature>
<feature type="transmembrane region" description="Helical" evidence="2">
    <location>
        <begin position="99"/>
        <end position="119"/>
    </location>
</feature>
<feature type="transmembrane region" description="Helical" evidence="2">
    <location>
        <begin position="142"/>
        <end position="162"/>
    </location>
</feature>
<feature type="transmembrane region" description="Helical" evidence="2">
    <location>
        <begin position="171"/>
        <end position="191"/>
    </location>
</feature>
<feature type="transmembrane region" description="Helical" evidence="2">
    <location>
        <begin position="228"/>
        <end position="248"/>
    </location>
</feature>
<feature type="transmembrane region" description="Helical" evidence="2">
    <location>
        <begin position="264"/>
        <end position="284"/>
    </location>
</feature>
<feature type="transmembrane region" description="Helical" evidence="2">
    <location>
        <begin position="295"/>
        <end position="315"/>
    </location>
</feature>
<feature type="transmembrane region" description="Helical" evidence="2">
    <location>
        <begin position="327"/>
        <end position="347"/>
    </location>
</feature>
<feature type="transmembrane region" description="Helical" evidence="2">
    <location>
        <begin position="375"/>
        <end position="395"/>
    </location>
</feature>
<feature type="transmembrane region" description="Helical" evidence="2">
    <location>
        <begin position="419"/>
        <end position="439"/>
    </location>
</feature>
<accession>O25425</accession>
<sequence length="443" mass="47173">MVDAFFQIAVLLFSLFLGARLGGLGVGYAGGLGVLILCLFLGLNPGKIPFDVILIIMAVISAISAMQKAGGLDYLVKIAEKILRKHPKQINYLAPSVAYCLTILAGTGHTVFSLIPVIVEVSQSQNIKPKAPLSLAVVSSQVAITASPVSAAVVFMSGILEPLGANYLTLLMVWIPTTFLACMLTAFIMGFTDLKLDSDPHYLERLKAGKISPPKIKEEKETSKNAKLSLWIFIGGVVAIVFYASAISKNIAFVSPVVLGRDHAIVSFMLSVATLIVLFCKINANEIAHSSVFKSGMQACVCVLGVAWLGDTFVSNHIDEIKRYASFLIADYPFLLAVALFLASMLLYSQAATSKALIPSVITALGISANHTEHLYIIVASFASVSALFVLPTYPTLLGAIAMDNTGTTKMGRYVFDHAFLIPGVLVVSLSVALGFVVAPLVL</sequence>
<name>DCUA_HELPY</name>
<reference key="1">
    <citation type="journal article" date="1997" name="Nature">
        <title>The complete genome sequence of the gastric pathogen Helicobacter pylori.</title>
        <authorList>
            <person name="Tomb J.-F."/>
            <person name="White O."/>
            <person name="Kerlavage A.R."/>
            <person name="Clayton R.A."/>
            <person name="Sutton G.G."/>
            <person name="Fleischmann R.D."/>
            <person name="Ketchum K.A."/>
            <person name="Klenk H.-P."/>
            <person name="Gill S.R."/>
            <person name="Dougherty B.A."/>
            <person name="Nelson K.E."/>
            <person name="Quackenbush J."/>
            <person name="Zhou L."/>
            <person name="Kirkness E.F."/>
            <person name="Peterson S.N."/>
            <person name="Loftus B.J."/>
            <person name="Richardson D.L."/>
            <person name="Dodson R.J."/>
            <person name="Khalak H.G."/>
            <person name="Glodek A."/>
            <person name="McKenney K."/>
            <person name="FitzGerald L.M."/>
            <person name="Lee N."/>
            <person name="Adams M.D."/>
            <person name="Hickey E.K."/>
            <person name="Berg D.E."/>
            <person name="Gocayne J.D."/>
            <person name="Utterback T.R."/>
            <person name="Peterson J.D."/>
            <person name="Kelley J.M."/>
            <person name="Cotton M.D."/>
            <person name="Weidman J.F."/>
            <person name="Fujii C."/>
            <person name="Bowman C."/>
            <person name="Watthey L."/>
            <person name="Wallin E."/>
            <person name="Hayes W.S."/>
            <person name="Borodovsky M."/>
            <person name="Karp P.D."/>
            <person name="Smith H.O."/>
            <person name="Fraser C.M."/>
            <person name="Venter J.C."/>
        </authorList>
    </citation>
    <scope>NUCLEOTIDE SEQUENCE [LARGE SCALE GENOMIC DNA]</scope>
    <source>
        <strain>ATCC 700392 / 26695</strain>
    </source>
</reference>